<comment type="function">
    <text evidence="1">Specifically methylates the adenine in position 1618 of 23S rRNA.</text>
</comment>
<comment type="catalytic activity">
    <reaction evidence="1">
        <text>adenosine(1618) in 23S rRNA + S-adenosyl-L-methionine = N(6)-methyladenosine(1618) in 23S rRNA + S-adenosyl-L-homocysteine + H(+)</text>
        <dbReference type="Rhea" id="RHEA:16497"/>
        <dbReference type="Rhea" id="RHEA-COMP:10229"/>
        <dbReference type="Rhea" id="RHEA-COMP:10231"/>
        <dbReference type="ChEBI" id="CHEBI:15378"/>
        <dbReference type="ChEBI" id="CHEBI:57856"/>
        <dbReference type="ChEBI" id="CHEBI:59789"/>
        <dbReference type="ChEBI" id="CHEBI:74411"/>
        <dbReference type="ChEBI" id="CHEBI:74449"/>
        <dbReference type="EC" id="2.1.1.181"/>
    </reaction>
</comment>
<comment type="subcellular location">
    <subcellularLocation>
        <location evidence="1">Cytoplasm</location>
    </subcellularLocation>
</comment>
<comment type="similarity">
    <text evidence="1">Belongs to the methyltransferase superfamily. METTL16/RlmF family.</text>
</comment>
<gene>
    <name evidence="1" type="primary">rlmF</name>
    <name type="ordered locus">SeAg_B0862</name>
</gene>
<dbReference type="EC" id="2.1.1.181" evidence="1"/>
<dbReference type="EMBL" id="CP001138">
    <property type="protein sequence ID" value="ACH49115.1"/>
    <property type="molecule type" value="Genomic_DNA"/>
</dbReference>
<dbReference type="RefSeq" id="WP_001275960.1">
    <property type="nucleotide sequence ID" value="NC_011149.1"/>
</dbReference>
<dbReference type="SMR" id="B5F0A4"/>
<dbReference type="KEGG" id="sea:SeAg_B0862"/>
<dbReference type="HOGENOM" id="CLU_027534_3_0_6"/>
<dbReference type="Proteomes" id="UP000008819">
    <property type="component" value="Chromosome"/>
</dbReference>
<dbReference type="GO" id="GO:0005737">
    <property type="term" value="C:cytoplasm"/>
    <property type="evidence" value="ECO:0007669"/>
    <property type="project" value="UniProtKB-SubCell"/>
</dbReference>
<dbReference type="GO" id="GO:0052907">
    <property type="term" value="F:23S rRNA (adenine(1618)-N(6))-methyltransferase activity"/>
    <property type="evidence" value="ECO:0007669"/>
    <property type="project" value="UniProtKB-EC"/>
</dbReference>
<dbReference type="GO" id="GO:0070475">
    <property type="term" value="P:rRNA base methylation"/>
    <property type="evidence" value="ECO:0007669"/>
    <property type="project" value="TreeGrafter"/>
</dbReference>
<dbReference type="FunFam" id="3.40.50.150:FF:000045">
    <property type="entry name" value="Ribosomal RNA large subunit methyltransferase F"/>
    <property type="match status" value="1"/>
</dbReference>
<dbReference type="Gene3D" id="3.40.50.150">
    <property type="entry name" value="Vaccinia Virus protein VP39"/>
    <property type="match status" value="1"/>
</dbReference>
<dbReference type="HAMAP" id="MF_01848">
    <property type="entry name" value="23SrRNA_methyltr_F"/>
    <property type="match status" value="1"/>
</dbReference>
<dbReference type="InterPro" id="IPR010286">
    <property type="entry name" value="METTL16/RlmF"/>
</dbReference>
<dbReference type="InterPro" id="IPR016909">
    <property type="entry name" value="rRNA_lsu_MeTfrase_F"/>
</dbReference>
<dbReference type="InterPro" id="IPR029063">
    <property type="entry name" value="SAM-dependent_MTases_sf"/>
</dbReference>
<dbReference type="NCBIfam" id="NF008725">
    <property type="entry name" value="PRK11727.1"/>
    <property type="match status" value="1"/>
</dbReference>
<dbReference type="PANTHER" id="PTHR13393:SF0">
    <property type="entry name" value="RNA N6-ADENOSINE-METHYLTRANSFERASE METTL16"/>
    <property type="match status" value="1"/>
</dbReference>
<dbReference type="PANTHER" id="PTHR13393">
    <property type="entry name" value="SAM-DEPENDENT METHYLTRANSFERASE"/>
    <property type="match status" value="1"/>
</dbReference>
<dbReference type="Pfam" id="PF05971">
    <property type="entry name" value="Methyltransf_10"/>
    <property type="match status" value="1"/>
</dbReference>
<dbReference type="PIRSF" id="PIRSF029038">
    <property type="entry name" value="Mtase_YbiN_prd"/>
    <property type="match status" value="1"/>
</dbReference>
<dbReference type="SUPFAM" id="SSF53335">
    <property type="entry name" value="S-adenosyl-L-methionine-dependent methyltransferases"/>
    <property type="match status" value="1"/>
</dbReference>
<protein>
    <recommendedName>
        <fullName evidence="1">Ribosomal RNA large subunit methyltransferase F</fullName>
        <ecNumber evidence="1">2.1.1.181</ecNumber>
    </recommendedName>
    <alternativeName>
        <fullName evidence="1">23S rRNA mA1618 methyltransferase</fullName>
    </alternativeName>
    <alternativeName>
        <fullName evidence="1">rRNA adenine N-6-methyltransferase</fullName>
    </alternativeName>
</protein>
<accession>B5F0A4</accession>
<evidence type="ECO:0000255" key="1">
    <source>
        <dbReference type="HAMAP-Rule" id="MF_01848"/>
    </source>
</evidence>
<sequence length="308" mass="34280">MSAQKPGLHPRNRHQHRYDLAALCQTTPELTSFLIRTPAGEQSVDFANPQAVKALNKALLAHFYAVTHWDIPPGFLCPPVPGRADYIHHLADLLGETTGSIPAQATILDVGVGANCIYPLIGVHEYGWRFTGSEVSDAAMSSAQAIIQANTGLSRAIRLRRQKDPAAIFTGIIHKNEFYDATLCNPPFHDSAAAARAGSERKRRNLGQNKDDALNFGGQQQELWCEGGEVAFIKKMIAESQSFRRQVLWFTTLVSRGENLPPLYRALAEAGAVKVVKKEMAQGQKQSRFIAWTFMDDDQRRRFITRKR</sequence>
<feature type="chain" id="PRO_1000188528" description="Ribosomal RNA large subunit methyltransferase F">
    <location>
        <begin position="1"/>
        <end position="308"/>
    </location>
</feature>
<reference key="1">
    <citation type="journal article" date="2011" name="J. Bacteriol.">
        <title>Comparative genomics of 28 Salmonella enterica isolates: evidence for CRISPR-mediated adaptive sublineage evolution.</title>
        <authorList>
            <person name="Fricke W.F."/>
            <person name="Mammel M.K."/>
            <person name="McDermott P.F."/>
            <person name="Tartera C."/>
            <person name="White D.G."/>
            <person name="Leclerc J.E."/>
            <person name="Ravel J."/>
            <person name="Cebula T.A."/>
        </authorList>
    </citation>
    <scope>NUCLEOTIDE SEQUENCE [LARGE SCALE GENOMIC DNA]</scope>
    <source>
        <strain>SL483</strain>
    </source>
</reference>
<keyword id="KW-0963">Cytoplasm</keyword>
<keyword id="KW-0489">Methyltransferase</keyword>
<keyword id="KW-0698">rRNA processing</keyword>
<keyword id="KW-0949">S-adenosyl-L-methionine</keyword>
<keyword id="KW-0808">Transferase</keyword>
<organism>
    <name type="scientific">Salmonella agona (strain SL483)</name>
    <dbReference type="NCBI Taxonomy" id="454166"/>
    <lineage>
        <taxon>Bacteria</taxon>
        <taxon>Pseudomonadati</taxon>
        <taxon>Pseudomonadota</taxon>
        <taxon>Gammaproteobacteria</taxon>
        <taxon>Enterobacterales</taxon>
        <taxon>Enterobacteriaceae</taxon>
        <taxon>Salmonella</taxon>
    </lineage>
</organism>
<name>RLMF_SALA4</name>
<proteinExistence type="inferred from homology"/>